<organism>
    <name type="scientific">Oncorhynchus mykiss</name>
    <name type="common">Rainbow trout</name>
    <name type="synonym">Salmo gairdneri</name>
    <dbReference type="NCBI Taxonomy" id="8022"/>
    <lineage>
        <taxon>Eukaryota</taxon>
        <taxon>Metazoa</taxon>
        <taxon>Chordata</taxon>
        <taxon>Craniata</taxon>
        <taxon>Vertebrata</taxon>
        <taxon>Euteleostomi</taxon>
        <taxon>Actinopterygii</taxon>
        <taxon>Neopterygii</taxon>
        <taxon>Teleostei</taxon>
        <taxon>Protacanthopterygii</taxon>
        <taxon>Salmoniformes</taxon>
        <taxon>Salmonidae</taxon>
        <taxon>Salmoninae</taxon>
        <taxon>Oncorhynchus</taxon>
    </lineage>
</organism>
<name>HIF1A_ONCMY</name>
<sequence length="766" mass="85049">MDTGVVPEKKSRVSSDRRKEKSRDAARCRRGKESEVFYELAQELPLPHSVTSNLDKASIMRLAISYLHMRNLLSTDNEEEQEEREMDSQLNGSYLKAIEGFLMVLSEDGDMIYLSENVNKCLGLAQIDLTGLSVFEYTHPCDHEELREMLVHRTGTSKKSKEPNTERSFFLRMKCTLTNRGRTVNVKSATWKVLHCSDHVRVHESPAEQIPGGHKEPSVPYLVLVCDPIPHPSNIEAPLDTKTFLSRHTLDMKFTYCDERITELMGYDPEDLLNRSVYEYYHALDSDHLMKTHHNLFAKGQVSTGQYRMLAKRGGFVWVETQATVIYNNKNSQPQCVVCVNYVLSGIEEEKMMLSLEQTEDMRPVKKELEEEESSEPEVSPVLLKEEKSPELDVIKLFTRAVETQPLSSLYDRLKEEPEALTLLAPAAGDTIISLDFSSPDSDILQKEVPLYKDVMLPSTSDKLALPLSLLPPSDQHLVPNTSVDTTEVSTGPDSSSTPGSHSFTEPDSPLDFCFPMESDINAEFKLDMVETLFAINPEPKTPFTLQAMEDLDLEMLAPYIPMDDDFQLRTLSPEEPLSCGPAQPLECSSLCSSVRLTQEVHSYPGSPFNAPGSLTASPALAASPALAAPEPADSPCPASLLTKTVPQMDREISLRSLASQNAQRKRKMSLSQAVGIGGLLQDHPGPGKKLKVSELSHADAPFNRTILLLPTDLASRLLGISSEGSGSPFTLPQLTRYDCEVNAPVGGRQLLLQGEELLSALDQVN</sequence>
<proteinExistence type="evidence at transcript level"/>
<reference key="1">
    <citation type="journal article" date="2001" name="J. Biol. Chem.">
        <title>Characterization of a hypoxia-inducible factor (HIF-1 alpha) from rainbow trout: accumulation of protein occurs at normal venous oxygen tension.</title>
        <authorList>
            <person name="Soitamo A.J."/>
            <person name="Rabergh C.M.I."/>
            <person name="Gassmann M."/>
            <person name="Sistonen L."/>
            <person name="Nikinmaa M."/>
        </authorList>
    </citation>
    <scope>NUCLEOTIDE SEQUENCE [MRNA]</scope>
</reference>
<feature type="chain" id="PRO_0000127225" description="Hypoxia-inducible factor 1-alpha">
    <location>
        <begin position="1"/>
        <end position="766"/>
    </location>
</feature>
<feature type="domain" description="bHLH" evidence="5">
    <location>
        <begin position="17"/>
        <end position="70"/>
    </location>
</feature>
<feature type="domain" description="PAS 1" evidence="4">
    <location>
        <begin position="82"/>
        <end position="159"/>
    </location>
</feature>
<feature type="domain" description="PAS 2" evidence="4">
    <location>
        <begin position="230"/>
        <end position="300"/>
    </location>
</feature>
<feature type="domain" description="PAC">
    <location>
        <begin position="304"/>
        <end position="347"/>
    </location>
</feature>
<feature type="region of interest" description="Disordered" evidence="6">
    <location>
        <begin position="1"/>
        <end position="26"/>
    </location>
</feature>
<feature type="region of interest" description="Disordered" evidence="6">
    <location>
        <begin position="361"/>
        <end position="383"/>
    </location>
</feature>
<feature type="region of interest" description="Disordered" evidence="6">
    <location>
        <begin position="475"/>
        <end position="509"/>
    </location>
</feature>
<feature type="short sequence motif" description="Nuclear localization signal" evidence="3">
    <location>
        <begin position="718"/>
        <end position="721"/>
    </location>
</feature>
<feature type="compositionally biased region" description="Basic and acidic residues" evidence="6">
    <location>
        <begin position="7"/>
        <end position="26"/>
    </location>
</feature>
<feature type="compositionally biased region" description="Polar residues" evidence="6">
    <location>
        <begin position="479"/>
        <end position="489"/>
    </location>
</feature>
<feature type="compositionally biased region" description="Low complexity" evidence="6">
    <location>
        <begin position="490"/>
        <end position="503"/>
    </location>
</feature>
<feature type="modified residue" description="4-hydroxyproline" evidence="1">
    <location>
        <position position="426"/>
    </location>
</feature>
<feature type="modified residue" description="4-hydroxyproline" evidence="1">
    <location>
        <position position="559"/>
    </location>
</feature>
<feature type="modified residue" description="(3S)-3-hydroxyasparagine" evidence="1">
    <location>
        <position position="743"/>
    </location>
</feature>
<accession>Q98SW2</accession>
<keyword id="KW-0010">Activator</keyword>
<keyword id="KW-0963">Cytoplasm</keyword>
<keyword id="KW-0238">DNA-binding</keyword>
<keyword id="KW-0379">Hydroxylation</keyword>
<keyword id="KW-0539">Nucleus</keyword>
<keyword id="KW-0677">Repeat</keyword>
<keyword id="KW-0804">Transcription</keyword>
<keyword id="KW-0805">Transcription regulation</keyword>
<keyword id="KW-0832">Ubl conjugation</keyword>
<gene>
    <name type="primary">hif1a</name>
</gene>
<comment type="function">
    <text evidence="1">Functions as a master transcriptional regulator of the adaptive response to hypoxia. Under hypoxic conditions, activates the transcription of over 40 genes, including erythropoietin, glucose transporters, glycolytic enzymes, vascular endothelial growth factor, HILPDA, and other genes whose protein products increase oxygen delivery or facilitate metabolic adaptation to hypoxia. Plays an essential role in embryonic vascularization, tumor angiogenesis and pathophysiology of ischemic disease.</text>
</comment>
<comment type="activity regulation">
    <text evidence="1">Induced by reactive oxygen species (ROS).</text>
</comment>
<comment type="subunit">
    <text evidence="1">Efficient DNA binding requires heterodimerization of an alpha and a beta/ARNT subunit.</text>
</comment>
<comment type="subcellular location">
    <subcellularLocation>
        <location evidence="1">Cytoplasm</location>
    </subcellularLocation>
    <subcellularLocation>
        <location evidence="1">Nucleus</location>
    </subcellularLocation>
    <subcellularLocation>
        <location evidence="2">Nucleus speckle</location>
    </subcellularLocation>
    <text evidence="1">Cytoplasmic in normoxia, nuclear translocation in response to hypoxia.</text>
</comment>
<comment type="domain">
    <text evidence="1">Contains two independent C-terminal transactivation domains, NTAD and CTAD, which function synergistically. Their transcriptional activity is repressed by an intervening inhibitory domain (ID) (By similarity).</text>
</comment>
<comment type="PTM">
    <text evidence="1">In normoxia, is hydroxylated on Pro-426 and Pro-559. The hydroxylated prolines promote interaction with VHL, initiating rapid ubiquitination and subsequent proteasomal degradation. Under hypoxia, proline hydroxylation is impaired and ubiquitination is attenuated, resulting in stabilization (By similarity).</text>
</comment>
<comment type="PTM">
    <text evidence="1">In normoxia, is hydroxylated on Asn-743, thus abrogating interaction with CREBBP and EP300 and preventing transcriptional activation.</text>
</comment>
<comment type="PTM">
    <text evidence="1">The iron and 2-oxoglutarate dependent 3-hydroxylation of asparagine is (S) stereospecific within HIF CTAD domains.</text>
</comment>
<dbReference type="EMBL" id="AF304864">
    <property type="protein sequence ID" value="AAK30364.1"/>
    <property type="molecule type" value="mRNA"/>
</dbReference>
<dbReference type="RefSeq" id="NP_001117760.1">
    <property type="nucleotide sequence ID" value="NM_001124288.1"/>
</dbReference>
<dbReference type="SMR" id="Q98SW2"/>
<dbReference type="GeneID" id="100135944"/>
<dbReference type="KEGG" id="omy:100135944"/>
<dbReference type="CTD" id="3091"/>
<dbReference type="OrthoDB" id="6021714at2759"/>
<dbReference type="Proteomes" id="UP000694395">
    <property type="component" value="Unplaced"/>
</dbReference>
<dbReference type="GO" id="GO:0005737">
    <property type="term" value="C:cytoplasm"/>
    <property type="evidence" value="ECO:0007669"/>
    <property type="project" value="UniProtKB-SubCell"/>
</dbReference>
<dbReference type="GO" id="GO:0016607">
    <property type="term" value="C:nuclear speck"/>
    <property type="evidence" value="ECO:0000250"/>
    <property type="project" value="UniProtKB"/>
</dbReference>
<dbReference type="GO" id="GO:0005634">
    <property type="term" value="C:nucleus"/>
    <property type="evidence" value="ECO:0000250"/>
    <property type="project" value="UniProtKB"/>
</dbReference>
<dbReference type="GO" id="GO:0003700">
    <property type="term" value="F:DNA-binding transcription factor activity"/>
    <property type="evidence" value="ECO:0000250"/>
    <property type="project" value="UniProtKB"/>
</dbReference>
<dbReference type="GO" id="GO:0000981">
    <property type="term" value="F:DNA-binding transcription factor activity, RNA polymerase II-specific"/>
    <property type="evidence" value="ECO:0007669"/>
    <property type="project" value="TreeGrafter"/>
</dbReference>
<dbReference type="GO" id="GO:0046983">
    <property type="term" value="F:protein dimerization activity"/>
    <property type="evidence" value="ECO:0007669"/>
    <property type="project" value="InterPro"/>
</dbReference>
<dbReference type="GO" id="GO:0000977">
    <property type="term" value="F:RNA polymerase II transcription regulatory region sequence-specific DNA binding"/>
    <property type="evidence" value="ECO:0007669"/>
    <property type="project" value="TreeGrafter"/>
</dbReference>
<dbReference type="GO" id="GO:0071456">
    <property type="term" value="P:cellular response to hypoxia"/>
    <property type="evidence" value="ECO:0007669"/>
    <property type="project" value="TreeGrafter"/>
</dbReference>
<dbReference type="GO" id="GO:0001678">
    <property type="term" value="P:intracellular glucose homeostasis"/>
    <property type="evidence" value="ECO:0000250"/>
    <property type="project" value="UniProtKB"/>
</dbReference>
<dbReference type="CDD" id="cd11433">
    <property type="entry name" value="bHLH-PAS_HIF"/>
    <property type="match status" value="1"/>
</dbReference>
<dbReference type="CDD" id="cd00130">
    <property type="entry name" value="PAS"/>
    <property type="match status" value="2"/>
</dbReference>
<dbReference type="FunFam" id="3.30.450.20:FF:000005">
    <property type="entry name" value="Hypoxia-inducible factor 1 subunit alpha"/>
    <property type="match status" value="1"/>
</dbReference>
<dbReference type="FunFam" id="3.30.450.20:FF:000015">
    <property type="entry name" value="Hypoxia-inducible factor 1-alpha isoform 1"/>
    <property type="match status" value="1"/>
</dbReference>
<dbReference type="FunFam" id="4.10.280.10:FF:000076">
    <property type="entry name" value="hypoxia-inducible factor 3-alpha isoform X1"/>
    <property type="match status" value="1"/>
</dbReference>
<dbReference type="Gene3D" id="4.10.280.10">
    <property type="entry name" value="Helix-loop-helix DNA-binding domain"/>
    <property type="match status" value="1"/>
</dbReference>
<dbReference type="Gene3D" id="3.30.450.20">
    <property type="entry name" value="PAS domain"/>
    <property type="match status" value="2"/>
</dbReference>
<dbReference type="InterPro" id="IPR011598">
    <property type="entry name" value="bHLH_dom"/>
</dbReference>
<dbReference type="InterPro" id="IPR014887">
    <property type="entry name" value="HIF-1_CTAD"/>
</dbReference>
<dbReference type="InterPro" id="IPR021537">
    <property type="entry name" value="HIF_alpha-like"/>
</dbReference>
<dbReference type="InterPro" id="IPR036638">
    <property type="entry name" value="HLH_DNA-bd_sf"/>
</dbReference>
<dbReference type="InterPro" id="IPR001610">
    <property type="entry name" value="PAC"/>
</dbReference>
<dbReference type="InterPro" id="IPR000014">
    <property type="entry name" value="PAS"/>
</dbReference>
<dbReference type="InterPro" id="IPR035965">
    <property type="entry name" value="PAS-like_dom_sf"/>
</dbReference>
<dbReference type="InterPro" id="IPR013655">
    <property type="entry name" value="PAS_fold_3"/>
</dbReference>
<dbReference type="NCBIfam" id="TIGR00229">
    <property type="entry name" value="sensory_box"/>
    <property type="match status" value="1"/>
</dbReference>
<dbReference type="PANTHER" id="PTHR23043">
    <property type="entry name" value="HYPOXIA-INDUCIBLE FACTOR 1 ALPHA"/>
    <property type="match status" value="1"/>
</dbReference>
<dbReference type="PANTHER" id="PTHR23043:SF7">
    <property type="entry name" value="HYPOXIA-INDUCIBLE FACTOR 1-ALPHA"/>
    <property type="match status" value="1"/>
</dbReference>
<dbReference type="Pfam" id="PF23171">
    <property type="entry name" value="bHLH_HIF1A"/>
    <property type="match status" value="1"/>
</dbReference>
<dbReference type="Pfam" id="PF11413">
    <property type="entry name" value="HIF-1"/>
    <property type="match status" value="1"/>
</dbReference>
<dbReference type="Pfam" id="PF08778">
    <property type="entry name" value="HIF-1a_CTAD"/>
    <property type="match status" value="1"/>
</dbReference>
<dbReference type="Pfam" id="PF08447">
    <property type="entry name" value="PAS_3"/>
    <property type="match status" value="1"/>
</dbReference>
<dbReference type="Pfam" id="PF13426">
    <property type="entry name" value="PAS_9"/>
    <property type="match status" value="1"/>
</dbReference>
<dbReference type="SMART" id="SM00353">
    <property type="entry name" value="HLH"/>
    <property type="match status" value="1"/>
</dbReference>
<dbReference type="SMART" id="SM00086">
    <property type="entry name" value="PAC"/>
    <property type="match status" value="1"/>
</dbReference>
<dbReference type="SMART" id="SM00091">
    <property type="entry name" value="PAS"/>
    <property type="match status" value="2"/>
</dbReference>
<dbReference type="SUPFAM" id="SSF47459">
    <property type="entry name" value="HLH, helix-loop-helix DNA-binding domain"/>
    <property type="match status" value="1"/>
</dbReference>
<dbReference type="SUPFAM" id="SSF55785">
    <property type="entry name" value="PYP-like sensor domain (PAS domain)"/>
    <property type="match status" value="2"/>
</dbReference>
<dbReference type="PROSITE" id="PS50888">
    <property type="entry name" value="BHLH"/>
    <property type="match status" value="1"/>
</dbReference>
<dbReference type="PROSITE" id="PS50112">
    <property type="entry name" value="PAS"/>
    <property type="match status" value="2"/>
</dbReference>
<evidence type="ECO:0000250" key="1">
    <source>
        <dbReference type="UniProtKB" id="Q16665"/>
    </source>
</evidence>
<evidence type="ECO:0000250" key="2">
    <source>
        <dbReference type="UniProtKB" id="Q61221"/>
    </source>
</evidence>
<evidence type="ECO:0000255" key="3"/>
<evidence type="ECO:0000255" key="4">
    <source>
        <dbReference type="PROSITE-ProRule" id="PRU00140"/>
    </source>
</evidence>
<evidence type="ECO:0000255" key="5">
    <source>
        <dbReference type="PROSITE-ProRule" id="PRU00981"/>
    </source>
</evidence>
<evidence type="ECO:0000256" key="6">
    <source>
        <dbReference type="SAM" id="MobiDB-lite"/>
    </source>
</evidence>
<protein>
    <recommendedName>
        <fullName>Hypoxia-inducible factor 1-alpha</fullName>
        <shortName>HIF-1-alpha</shortName>
        <shortName>HIF1-alpha</shortName>
    </recommendedName>
</protein>